<dbReference type="EMBL" id="AM236080">
    <property type="protein sequence ID" value="CAK07257.1"/>
    <property type="molecule type" value="Genomic_DNA"/>
</dbReference>
<dbReference type="RefSeq" id="WP_003547520.1">
    <property type="nucleotide sequence ID" value="NC_008380.1"/>
</dbReference>
<dbReference type="SMR" id="Q1MIF3"/>
<dbReference type="EnsemblBacteria" id="CAK07257">
    <property type="protein sequence ID" value="CAK07257"/>
    <property type="gene ID" value="RL1762"/>
</dbReference>
<dbReference type="GeneID" id="67484951"/>
<dbReference type="KEGG" id="rle:RL1762"/>
<dbReference type="eggNOG" id="COG0081">
    <property type="taxonomic scope" value="Bacteria"/>
</dbReference>
<dbReference type="HOGENOM" id="CLU_062853_0_0_5"/>
<dbReference type="Proteomes" id="UP000006575">
    <property type="component" value="Chromosome"/>
</dbReference>
<dbReference type="GO" id="GO:0022625">
    <property type="term" value="C:cytosolic large ribosomal subunit"/>
    <property type="evidence" value="ECO:0007669"/>
    <property type="project" value="TreeGrafter"/>
</dbReference>
<dbReference type="GO" id="GO:0019843">
    <property type="term" value="F:rRNA binding"/>
    <property type="evidence" value="ECO:0007669"/>
    <property type="project" value="UniProtKB-UniRule"/>
</dbReference>
<dbReference type="GO" id="GO:0003735">
    <property type="term" value="F:structural constituent of ribosome"/>
    <property type="evidence" value="ECO:0007669"/>
    <property type="project" value="InterPro"/>
</dbReference>
<dbReference type="GO" id="GO:0000049">
    <property type="term" value="F:tRNA binding"/>
    <property type="evidence" value="ECO:0007669"/>
    <property type="project" value="UniProtKB-KW"/>
</dbReference>
<dbReference type="GO" id="GO:0006417">
    <property type="term" value="P:regulation of translation"/>
    <property type="evidence" value="ECO:0007669"/>
    <property type="project" value="UniProtKB-KW"/>
</dbReference>
<dbReference type="GO" id="GO:0006412">
    <property type="term" value="P:translation"/>
    <property type="evidence" value="ECO:0007669"/>
    <property type="project" value="UniProtKB-UniRule"/>
</dbReference>
<dbReference type="CDD" id="cd00403">
    <property type="entry name" value="Ribosomal_L1"/>
    <property type="match status" value="1"/>
</dbReference>
<dbReference type="FunFam" id="3.40.50.790:FF:000001">
    <property type="entry name" value="50S ribosomal protein L1"/>
    <property type="match status" value="1"/>
</dbReference>
<dbReference type="Gene3D" id="3.30.190.20">
    <property type="match status" value="1"/>
</dbReference>
<dbReference type="Gene3D" id="3.40.50.790">
    <property type="match status" value="1"/>
</dbReference>
<dbReference type="HAMAP" id="MF_01318_B">
    <property type="entry name" value="Ribosomal_uL1_B"/>
    <property type="match status" value="1"/>
</dbReference>
<dbReference type="InterPro" id="IPR005878">
    <property type="entry name" value="Ribosom_uL1_bac-type"/>
</dbReference>
<dbReference type="InterPro" id="IPR002143">
    <property type="entry name" value="Ribosomal_uL1"/>
</dbReference>
<dbReference type="InterPro" id="IPR023674">
    <property type="entry name" value="Ribosomal_uL1-like"/>
</dbReference>
<dbReference type="InterPro" id="IPR028364">
    <property type="entry name" value="Ribosomal_uL1/biogenesis"/>
</dbReference>
<dbReference type="InterPro" id="IPR016095">
    <property type="entry name" value="Ribosomal_uL1_3-a/b-sand"/>
</dbReference>
<dbReference type="InterPro" id="IPR023673">
    <property type="entry name" value="Ribosomal_uL1_CS"/>
</dbReference>
<dbReference type="NCBIfam" id="TIGR01169">
    <property type="entry name" value="rplA_bact"/>
    <property type="match status" value="1"/>
</dbReference>
<dbReference type="PANTHER" id="PTHR36427">
    <property type="entry name" value="54S RIBOSOMAL PROTEIN L1, MITOCHONDRIAL"/>
    <property type="match status" value="1"/>
</dbReference>
<dbReference type="PANTHER" id="PTHR36427:SF3">
    <property type="entry name" value="LARGE RIBOSOMAL SUBUNIT PROTEIN UL1M"/>
    <property type="match status" value="1"/>
</dbReference>
<dbReference type="Pfam" id="PF00687">
    <property type="entry name" value="Ribosomal_L1"/>
    <property type="match status" value="1"/>
</dbReference>
<dbReference type="PIRSF" id="PIRSF002155">
    <property type="entry name" value="Ribosomal_L1"/>
    <property type="match status" value="1"/>
</dbReference>
<dbReference type="SUPFAM" id="SSF56808">
    <property type="entry name" value="Ribosomal protein L1"/>
    <property type="match status" value="1"/>
</dbReference>
<dbReference type="PROSITE" id="PS01199">
    <property type="entry name" value="RIBOSOMAL_L1"/>
    <property type="match status" value="1"/>
</dbReference>
<gene>
    <name evidence="1" type="primary">rplA</name>
    <name type="ordered locus">RL1762</name>
</gene>
<proteinExistence type="inferred from homology"/>
<organism>
    <name type="scientific">Rhizobium johnstonii (strain DSM 114642 / LMG 32736 / 3841)</name>
    <name type="common">Rhizobium leguminosarum bv. viciae</name>
    <dbReference type="NCBI Taxonomy" id="216596"/>
    <lineage>
        <taxon>Bacteria</taxon>
        <taxon>Pseudomonadati</taxon>
        <taxon>Pseudomonadota</taxon>
        <taxon>Alphaproteobacteria</taxon>
        <taxon>Hyphomicrobiales</taxon>
        <taxon>Rhizobiaceae</taxon>
        <taxon>Rhizobium/Agrobacterium group</taxon>
        <taxon>Rhizobium</taxon>
        <taxon>Rhizobium johnstonii</taxon>
    </lineage>
</organism>
<sequence>MAGKRTQKINEGVDPTKLYALTLAIGMVKERAVAKFDETIEVSMNLGVDPRHADQMVRGVVNLPNGTGRTVRVAVFARGAKADEAKAAGADIVGAEDLVEIVQGGKIEFDRCIATPDMMPLVGRLGKVLGPRGMMPNPKVGTVTMDVAGAVKASKGGAVEFRVEKAGIVHAGIGKASFDAKALEENIRAFADAVIKAKPAGAKGNYVKRVAISSTMGPGVKIEPGSVTGAPAA</sequence>
<name>RL1_RHIJ3</name>
<feature type="chain" id="PRO_0000308084" description="Large ribosomal subunit protein uL1">
    <location>
        <begin position="1"/>
        <end position="233"/>
    </location>
</feature>
<reference key="1">
    <citation type="journal article" date="2006" name="Genome Biol.">
        <title>The genome of Rhizobium leguminosarum has recognizable core and accessory components.</title>
        <authorList>
            <person name="Young J.P.W."/>
            <person name="Crossman L.C."/>
            <person name="Johnston A.W.B."/>
            <person name="Thomson N.R."/>
            <person name="Ghazoui Z.F."/>
            <person name="Hull K.H."/>
            <person name="Wexler M."/>
            <person name="Curson A.R.J."/>
            <person name="Todd J.D."/>
            <person name="Poole P.S."/>
            <person name="Mauchline T.H."/>
            <person name="East A.K."/>
            <person name="Quail M.A."/>
            <person name="Churcher C."/>
            <person name="Arrowsmith C."/>
            <person name="Cherevach I."/>
            <person name="Chillingworth T."/>
            <person name="Clarke K."/>
            <person name="Cronin A."/>
            <person name="Davis P."/>
            <person name="Fraser A."/>
            <person name="Hance Z."/>
            <person name="Hauser H."/>
            <person name="Jagels K."/>
            <person name="Moule S."/>
            <person name="Mungall K."/>
            <person name="Norbertczak H."/>
            <person name="Rabbinowitsch E."/>
            <person name="Sanders M."/>
            <person name="Simmonds M."/>
            <person name="Whitehead S."/>
            <person name="Parkhill J."/>
        </authorList>
    </citation>
    <scope>NUCLEOTIDE SEQUENCE [LARGE SCALE GENOMIC DNA]</scope>
    <source>
        <strain>DSM 114642 / LMG 32736 / 3841</strain>
    </source>
</reference>
<keyword id="KW-0678">Repressor</keyword>
<keyword id="KW-0687">Ribonucleoprotein</keyword>
<keyword id="KW-0689">Ribosomal protein</keyword>
<keyword id="KW-0694">RNA-binding</keyword>
<keyword id="KW-0699">rRNA-binding</keyword>
<keyword id="KW-0810">Translation regulation</keyword>
<keyword id="KW-0820">tRNA-binding</keyword>
<accession>Q1MIF3</accession>
<comment type="function">
    <text evidence="1">Binds directly to 23S rRNA. The L1 stalk is quite mobile in the ribosome, and is involved in E site tRNA release.</text>
</comment>
<comment type="function">
    <text evidence="1">Protein L1 is also a translational repressor protein, it controls the translation of the L11 operon by binding to its mRNA.</text>
</comment>
<comment type="subunit">
    <text evidence="1">Part of the 50S ribosomal subunit.</text>
</comment>
<comment type="similarity">
    <text evidence="1">Belongs to the universal ribosomal protein uL1 family.</text>
</comment>
<protein>
    <recommendedName>
        <fullName evidence="1">Large ribosomal subunit protein uL1</fullName>
    </recommendedName>
    <alternativeName>
        <fullName evidence="2">50S ribosomal protein L1</fullName>
    </alternativeName>
</protein>
<evidence type="ECO:0000255" key="1">
    <source>
        <dbReference type="HAMAP-Rule" id="MF_01318"/>
    </source>
</evidence>
<evidence type="ECO:0000305" key="2"/>